<comment type="function">
    <text evidence="1">Component of SCF(ASK-cullin-F-box) E3 ubiquitin ligase complexes, which may mediate the ubiquitination and subsequent proteasomal degradation of target proteins.</text>
</comment>
<comment type="pathway">
    <text>Protein modification; protein ubiquitination.</text>
</comment>
<comment type="subunit">
    <text evidence="1">Part of a SCF (ASK-cullin-F-box) protein ligase complex.</text>
</comment>
<comment type="domain">
    <text evidence="1">The F-box is necessary for the interaction with ASK proteins (By similarity). Interacts with ASK4.</text>
</comment>
<keyword id="KW-1185">Reference proteome</keyword>
<keyword id="KW-0833">Ubl conjugation pathway</keyword>
<name>FB309_ARATH</name>
<dbReference type="EMBL" id="AL035440">
    <property type="protein sequence ID" value="CAB36551.1"/>
    <property type="molecule type" value="Genomic_DNA"/>
</dbReference>
<dbReference type="EMBL" id="AL161566">
    <property type="protein sequence ID" value="CAB79560.1"/>
    <property type="molecule type" value="Genomic_DNA"/>
</dbReference>
<dbReference type="EMBL" id="CP002687">
    <property type="protein sequence ID" value="AEE85291.1"/>
    <property type="molecule type" value="Genomic_DNA"/>
</dbReference>
<dbReference type="EMBL" id="CP002687">
    <property type="protein sequence ID" value="AEE85292.1"/>
    <property type="molecule type" value="Genomic_DNA"/>
</dbReference>
<dbReference type="EMBL" id="CP002687">
    <property type="protein sequence ID" value="AEE85293.1"/>
    <property type="molecule type" value="Genomic_DNA"/>
</dbReference>
<dbReference type="EMBL" id="CP002687">
    <property type="protein sequence ID" value="AEE85294.1"/>
    <property type="molecule type" value="Genomic_DNA"/>
</dbReference>
<dbReference type="EMBL" id="CP002687">
    <property type="protein sequence ID" value="ANM67140.1"/>
    <property type="molecule type" value="Genomic_DNA"/>
</dbReference>
<dbReference type="EMBL" id="AY062462">
    <property type="protein sequence ID" value="AAL32540.1"/>
    <property type="molecule type" value="mRNA"/>
</dbReference>
<dbReference type="EMBL" id="BT000114">
    <property type="protein sequence ID" value="AAN15433.1"/>
    <property type="molecule type" value="mRNA"/>
</dbReference>
<dbReference type="EMBL" id="AK316857">
    <property type="protein sequence ID" value="BAH19566.1"/>
    <property type="molecule type" value="mRNA"/>
</dbReference>
<dbReference type="PIR" id="T04828">
    <property type="entry name" value="T04828"/>
</dbReference>
<dbReference type="RefSeq" id="NP_001031729.1">
    <property type="nucleotide sequence ID" value="NM_001036652.1"/>
</dbReference>
<dbReference type="RefSeq" id="NP_001078451.1">
    <property type="nucleotide sequence ID" value="NM_001084982.1"/>
</dbReference>
<dbReference type="RefSeq" id="NP_001328988.1">
    <property type="nucleotide sequence ID" value="NM_001341836.1"/>
</dbReference>
<dbReference type="RefSeq" id="NP_194435.1">
    <property type="nucleotide sequence ID" value="NM_118839.4"/>
</dbReference>
<dbReference type="RefSeq" id="NP_974624.1">
    <property type="nucleotide sequence ID" value="NM_202895.2"/>
</dbReference>
<dbReference type="BioGRID" id="14100">
    <property type="interactions" value="2"/>
</dbReference>
<dbReference type="FunCoup" id="Q9SZ44">
    <property type="interactions" value="81"/>
</dbReference>
<dbReference type="IntAct" id="Q9SZ44">
    <property type="interactions" value="1"/>
</dbReference>
<dbReference type="STRING" id="3702.Q9SZ44"/>
<dbReference type="PaxDb" id="3702-AT4G27050.2"/>
<dbReference type="ProteomicsDB" id="230083"/>
<dbReference type="EnsemblPlants" id="AT4G27050.1">
    <property type="protein sequence ID" value="AT4G27050.1"/>
    <property type="gene ID" value="AT4G27050"/>
</dbReference>
<dbReference type="EnsemblPlants" id="AT4G27050.2">
    <property type="protein sequence ID" value="AT4G27050.2"/>
    <property type="gene ID" value="AT4G27050"/>
</dbReference>
<dbReference type="EnsemblPlants" id="AT4G27050.3">
    <property type="protein sequence ID" value="AT4G27050.3"/>
    <property type="gene ID" value="AT4G27050"/>
</dbReference>
<dbReference type="EnsemblPlants" id="AT4G27050.4">
    <property type="protein sequence ID" value="AT4G27050.4"/>
    <property type="gene ID" value="AT4G27050"/>
</dbReference>
<dbReference type="EnsemblPlants" id="AT4G27050.5">
    <property type="protein sequence ID" value="AT4G27050.5"/>
    <property type="gene ID" value="AT4G27050"/>
</dbReference>
<dbReference type="GeneID" id="828813"/>
<dbReference type="Gramene" id="AT4G27050.1">
    <property type="protein sequence ID" value="AT4G27050.1"/>
    <property type="gene ID" value="AT4G27050"/>
</dbReference>
<dbReference type="Gramene" id="AT4G27050.2">
    <property type="protein sequence ID" value="AT4G27050.2"/>
    <property type="gene ID" value="AT4G27050"/>
</dbReference>
<dbReference type="Gramene" id="AT4G27050.3">
    <property type="protein sequence ID" value="AT4G27050.3"/>
    <property type="gene ID" value="AT4G27050"/>
</dbReference>
<dbReference type="Gramene" id="AT4G27050.4">
    <property type="protein sequence ID" value="AT4G27050.4"/>
    <property type="gene ID" value="AT4G27050"/>
</dbReference>
<dbReference type="Gramene" id="AT4G27050.5">
    <property type="protein sequence ID" value="AT4G27050.5"/>
    <property type="gene ID" value="AT4G27050"/>
</dbReference>
<dbReference type="KEGG" id="ath:AT4G27050"/>
<dbReference type="Araport" id="AT4G27050"/>
<dbReference type="TAIR" id="AT4G27050"/>
<dbReference type="HOGENOM" id="CLU_010721_7_1_1"/>
<dbReference type="InParanoid" id="Q9SZ44"/>
<dbReference type="OMA" id="HINSWIC"/>
<dbReference type="PhylomeDB" id="Q9SZ44"/>
<dbReference type="UniPathway" id="UPA00143"/>
<dbReference type="PRO" id="PR:Q9SZ44"/>
<dbReference type="Proteomes" id="UP000006548">
    <property type="component" value="Chromosome 4"/>
</dbReference>
<dbReference type="ExpressionAtlas" id="Q9SZ44">
    <property type="expression patterns" value="baseline and differential"/>
</dbReference>
<dbReference type="GO" id="GO:0005737">
    <property type="term" value="C:cytoplasm"/>
    <property type="evidence" value="ECO:0000314"/>
    <property type="project" value="TAIR"/>
</dbReference>
<dbReference type="GO" id="GO:0005634">
    <property type="term" value="C:nucleus"/>
    <property type="evidence" value="ECO:0000314"/>
    <property type="project" value="TAIR"/>
</dbReference>
<dbReference type="GO" id="GO:0016567">
    <property type="term" value="P:protein ubiquitination"/>
    <property type="evidence" value="ECO:0007669"/>
    <property type="project" value="UniProtKB-UniPathway"/>
</dbReference>
<dbReference type="CDD" id="cd22160">
    <property type="entry name" value="F-box_AtFBL13-like"/>
    <property type="match status" value="1"/>
</dbReference>
<dbReference type="Gene3D" id="3.80.10.10">
    <property type="entry name" value="Ribonuclease Inhibitor"/>
    <property type="match status" value="1"/>
</dbReference>
<dbReference type="InterPro" id="IPR036047">
    <property type="entry name" value="F-box-like_dom_sf"/>
</dbReference>
<dbReference type="InterPro" id="IPR053781">
    <property type="entry name" value="F-box_AtFBL13-like"/>
</dbReference>
<dbReference type="InterPro" id="IPR001810">
    <property type="entry name" value="F-box_dom"/>
</dbReference>
<dbReference type="InterPro" id="IPR006566">
    <property type="entry name" value="FBD"/>
</dbReference>
<dbReference type="InterPro" id="IPR055294">
    <property type="entry name" value="FBL60-like"/>
</dbReference>
<dbReference type="InterPro" id="IPR032675">
    <property type="entry name" value="LRR_dom_sf"/>
</dbReference>
<dbReference type="InterPro" id="IPR055411">
    <property type="entry name" value="LRR_FXL15/At3g58940/PEG3-like"/>
</dbReference>
<dbReference type="PANTHER" id="PTHR31293:SF22">
    <property type="entry name" value="BNAC06G06520D PROTEIN"/>
    <property type="match status" value="1"/>
</dbReference>
<dbReference type="PANTHER" id="PTHR31293">
    <property type="entry name" value="RNI-LIKE SUPERFAMILY PROTEIN"/>
    <property type="match status" value="1"/>
</dbReference>
<dbReference type="Pfam" id="PF00646">
    <property type="entry name" value="F-box"/>
    <property type="match status" value="1"/>
</dbReference>
<dbReference type="Pfam" id="PF24758">
    <property type="entry name" value="LRR_At5g56370"/>
    <property type="match status" value="1"/>
</dbReference>
<dbReference type="SMART" id="SM00579">
    <property type="entry name" value="FBD"/>
    <property type="match status" value="1"/>
</dbReference>
<dbReference type="SUPFAM" id="SSF81383">
    <property type="entry name" value="F-box domain"/>
    <property type="match status" value="1"/>
</dbReference>
<dbReference type="SUPFAM" id="SSF52047">
    <property type="entry name" value="RNI-like"/>
    <property type="match status" value="1"/>
</dbReference>
<dbReference type="PROSITE" id="PS50181">
    <property type="entry name" value="FBOX"/>
    <property type="match status" value="1"/>
</dbReference>
<sequence length="453" mass="51301">MDTDLISNLPDDVLGKILSLVPTKLAAATSVLSKRWRNLLPLVDSLDFDETMLFYPDNKDGEDEASSYESGQRRRHSFSHFVDKTLALLSNAPLTEKFSLKCYHEDDGARINRWIRTALERGCLELNLEAANYLPIDSQYFTSNTLVKLTISDGFYPGGHLLPFGGVFFPALKTLTLVSVCFTSVEMINFFIHGCPALEELFLCVWMQYMSSPNVKRVTITSDFDDDIQRPSMVLKTPSLVYLDYSSYVAGNYYVVLDSLVEARLDLRLYEPIIYDEDGLWNAEVFGNITNLIEAIRTIKILHLSPSSLEVFYYCCDLPVLEDLVNLSIESDKEKGWEVMPRLLNKSPNLQTLVVKGLVHRVTYCCGDACACIRMKDREIVSCLSRCRVKVLKILGYGGSFRELKQMRHFLGKLKCLETVKVGVKEGSKKSNYLVANVMALPRVSSKCKIQFI</sequence>
<proteinExistence type="evidence at protein level"/>
<gene>
    <name type="ordered locus">At4g27050</name>
    <name type="ORF">F10M23.390</name>
</gene>
<evidence type="ECO:0000250" key="1"/>
<evidence type="ECO:0000255" key="2">
    <source>
        <dbReference type="PROSITE-ProRule" id="PRU00080"/>
    </source>
</evidence>
<evidence type="ECO:0000305" key="3"/>
<protein>
    <recommendedName>
        <fullName>F-box protein At4g27050</fullName>
    </recommendedName>
</protein>
<feature type="chain" id="PRO_0000281973" description="F-box protein At4g27050">
    <location>
        <begin position="1"/>
        <end position="453"/>
    </location>
</feature>
<feature type="domain" description="F-box" evidence="2">
    <location>
        <begin position="3"/>
        <end position="51"/>
    </location>
</feature>
<feature type="sequence conflict" description="In Ref. 3; AAL32540/AAN15433." evidence="3" ref="3">
    <original>K</original>
    <variation>R</variation>
    <location>
        <position position="216"/>
    </location>
</feature>
<feature type="sequence conflict" description="In Ref. 4; BAH19566." evidence="3" ref="4">
    <original>C</original>
    <variation>R</variation>
    <location>
        <position position="370"/>
    </location>
</feature>
<reference key="1">
    <citation type="journal article" date="1999" name="Nature">
        <title>Sequence and analysis of chromosome 4 of the plant Arabidopsis thaliana.</title>
        <authorList>
            <person name="Mayer K.F.X."/>
            <person name="Schueller C."/>
            <person name="Wambutt R."/>
            <person name="Murphy G."/>
            <person name="Volckaert G."/>
            <person name="Pohl T."/>
            <person name="Duesterhoeft A."/>
            <person name="Stiekema W."/>
            <person name="Entian K.-D."/>
            <person name="Terryn N."/>
            <person name="Harris B."/>
            <person name="Ansorge W."/>
            <person name="Brandt P."/>
            <person name="Grivell L.A."/>
            <person name="Rieger M."/>
            <person name="Weichselgartner M."/>
            <person name="de Simone V."/>
            <person name="Obermaier B."/>
            <person name="Mache R."/>
            <person name="Mueller M."/>
            <person name="Kreis M."/>
            <person name="Delseny M."/>
            <person name="Puigdomenech P."/>
            <person name="Watson M."/>
            <person name="Schmidtheini T."/>
            <person name="Reichert B."/>
            <person name="Portetelle D."/>
            <person name="Perez-Alonso M."/>
            <person name="Boutry M."/>
            <person name="Bancroft I."/>
            <person name="Vos P."/>
            <person name="Hoheisel J."/>
            <person name="Zimmermann W."/>
            <person name="Wedler H."/>
            <person name="Ridley P."/>
            <person name="Langham S.-A."/>
            <person name="McCullagh B."/>
            <person name="Bilham L."/>
            <person name="Robben J."/>
            <person name="van der Schueren J."/>
            <person name="Grymonprez B."/>
            <person name="Chuang Y.-J."/>
            <person name="Vandenbussche F."/>
            <person name="Braeken M."/>
            <person name="Weltjens I."/>
            <person name="Voet M."/>
            <person name="Bastiaens I."/>
            <person name="Aert R."/>
            <person name="Defoor E."/>
            <person name="Weitzenegger T."/>
            <person name="Bothe G."/>
            <person name="Ramsperger U."/>
            <person name="Hilbert H."/>
            <person name="Braun M."/>
            <person name="Holzer E."/>
            <person name="Brandt A."/>
            <person name="Peters S."/>
            <person name="van Staveren M."/>
            <person name="Dirkse W."/>
            <person name="Mooijman P."/>
            <person name="Klein Lankhorst R."/>
            <person name="Rose M."/>
            <person name="Hauf J."/>
            <person name="Koetter P."/>
            <person name="Berneiser S."/>
            <person name="Hempel S."/>
            <person name="Feldpausch M."/>
            <person name="Lamberth S."/>
            <person name="Van den Daele H."/>
            <person name="De Keyser A."/>
            <person name="Buysshaert C."/>
            <person name="Gielen J."/>
            <person name="Villarroel R."/>
            <person name="De Clercq R."/>
            <person name="van Montagu M."/>
            <person name="Rogers J."/>
            <person name="Cronin A."/>
            <person name="Quail M.A."/>
            <person name="Bray-Allen S."/>
            <person name="Clark L."/>
            <person name="Doggett J."/>
            <person name="Hall S."/>
            <person name="Kay M."/>
            <person name="Lennard N."/>
            <person name="McLay K."/>
            <person name="Mayes R."/>
            <person name="Pettett A."/>
            <person name="Rajandream M.A."/>
            <person name="Lyne M."/>
            <person name="Benes V."/>
            <person name="Rechmann S."/>
            <person name="Borkova D."/>
            <person name="Bloecker H."/>
            <person name="Scharfe M."/>
            <person name="Grimm M."/>
            <person name="Loehnert T.-H."/>
            <person name="Dose S."/>
            <person name="de Haan M."/>
            <person name="Maarse A.C."/>
            <person name="Schaefer M."/>
            <person name="Mueller-Auer S."/>
            <person name="Gabel C."/>
            <person name="Fuchs M."/>
            <person name="Fartmann B."/>
            <person name="Granderath K."/>
            <person name="Dauner D."/>
            <person name="Herzl A."/>
            <person name="Neumann S."/>
            <person name="Argiriou A."/>
            <person name="Vitale D."/>
            <person name="Liguori R."/>
            <person name="Piravandi E."/>
            <person name="Massenet O."/>
            <person name="Quigley F."/>
            <person name="Clabauld G."/>
            <person name="Muendlein A."/>
            <person name="Felber R."/>
            <person name="Schnabl S."/>
            <person name="Hiller R."/>
            <person name="Schmidt W."/>
            <person name="Lecharny A."/>
            <person name="Aubourg S."/>
            <person name="Chefdor F."/>
            <person name="Cooke R."/>
            <person name="Berger C."/>
            <person name="Monfort A."/>
            <person name="Casacuberta E."/>
            <person name="Gibbons T."/>
            <person name="Weber N."/>
            <person name="Vandenbol M."/>
            <person name="Bargues M."/>
            <person name="Terol J."/>
            <person name="Torres A."/>
            <person name="Perez-Perez A."/>
            <person name="Purnelle B."/>
            <person name="Bent E."/>
            <person name="Johnson S."/>
            <person name="Tacon D."/>
            <person name="Jesse T."/>
            <person name="Heijnen L."/>
            <person name="Schwarz S."/>
            <person name="Scholler P."/>
            <person name="Heber S."/>
            <person name="Francs P."/>
            <person name="Bielke C."/>
            <person name="Frishman D."/>
            <person name="Haase D."/>
            <person name="Lemcke K."/>
            <person name="Mewes H.-W."/>
            <person name="Stocker S."/>
            <person name="Zaccaria P."/>
            <person name="Bevan M."/>
            <person name="Wilson R.K."/>
            <person name="de la Bastide M."/>
            <person name="Habermann K."/>
            <person name="Parnell L."/>
            <person name="Dedhia N."/>
            <person name="Gnoj L."/>
            <person name="Schutz K."/>
            <person name="Huang E."/>
            <person name="Spiegel L."/>
            <person name="Sekhon M."/>
            <person name="Murray J."/>
            <person name="Sheet P."/>
            <person name="Cordes M."/>
            <person name="Abu-Threideh J."/>
            <person name="Stoneking T."/>
            <person name="Kalicki J."/>
            <person name="Graves T."/>
            <person name="Harmon G."/>
            <person name="Edwards J."/>
            <person name="Latreille P."/>
            <person name="Courtney L."/>
            <person name="Cloud J."/>
            <person name="Abbott A."/>
            <person name="Scott K."/>
            <person name="Johnson D."/>
            <person name="Minx P."/>
            <person name="Bentley D."/>
            <person name="Fulton B."/>
            <person name="Miller N."/>
            <person name="Greco T."/>
            <person name="Kemp K."/>
            <person name="Kramer J."/>
            <person name="Fulton L."/>
            <person name="Mardis E."/>
            <person name="Dante M."/>
            <person name="Pepin K."/>
            <person name="Hillier L.W."/>
            <person name="Nelson J."/>
            <person name="Spieth J."/>
            <person name="Ryan E."/>
            <person name="Andrews S."/>
            <person name="Geisel C."/>
            <person name="Layman D."/>
            <person name="Du H."/>
            <person name="Ali J."/>
            <person name="Berghoff A."/>
            <person name="Jones K."/>
            <person name="Drone K."/>
            <person name="Cotton M."/>
            <person name="Joshu C."/>
            <person name="Antonoiu B."/>
            <person name="Zidanic M."/>
            <person name="Strong C."/>
            <person name="Sun H."/>
            <person name="Lamar B."/>
            <person name="Yordan C."/>
            <person name="Ma P."/>
            <person name="Zhong J."/>
            <person name="Preston R."/>
            <person name="Vil D."/>
            <person name="Shekher M."/>
            <person name="Matero A."/>
            <person name="Shah R."/>
            <person name="Swaby I.K."/>
            <person name="O'Shaughnessy A."/>
            <person name="Rodriguez M."/>
            <person name="Hoffman J."/>
            <person name="Till S."/>
            <person name="Granat S."/>
            <person name="Shohdy N."/>
            <person name="Hasegawa A."/>
            <person name="Hameed A."/>
            <person name="Lodhi M."/>
            <person name="Johnson A."/>
            <person name="Chen E."/>
            <person name="Marra M.A."/>
            <person name="Martienssen R."/>
            <person name="McCombie W.R."/>
        </authorList>
    </citation>
    <scope>NUCLEOTIDE SEQUENCE [LARGE SCALE GENOMIC DNA]</scope>
    <source>
        <strain>cv. Columbia</strain>
    </source>
</reference>
<reference key="2">
    <citation type="journal article" date="2017" name="Plant J.">
        <title>Araport11: a complete reannotation of the Arabidopsis thaliana reference genome.</title>
        <authorList>
            <person name="Cheng C.Y."/>
            <person name="Krishnakumar V."/>
            <person name="Chan A.P."/>
            <person name="Thibaud-Nissen F."/>
            <person name="Schobel S."/>
            <person name="Town C.D."/>
        </authorList>
    </citation>
    <scope>GENOME REANNOTATION</scope>
    <source>
        <strain>cv. Columbia</strain>
    </source>
</reference>
<reference key="3">
    <citation type="journal article" date="2003" name="Science">
        <title>Empirical analysis of transcriptional activity in the Arabidopsis genome.</title>
        <authorList>
            <person name="Yamada K."/>
            <person name="Lim J."/>
            <person name="Dale J.M."/>
            <person name="Chen H."/>
            <person name="Shinn P."/>
            <person name="Palm C.J."/>
            <person name="Southwick A.M."/>
            <person name="Wu H.C."/>
            <person name="Kim C.J."/>
            <person name="Nguyen M."/>
            <person name="Pham P.K."/>
            <person name="Cheuk R.F."/>
            <person name="Karlin-Newmann G."/>
            <person name="Liu S.X."/>
            <person name="Lam B."/>
            <person name="Sakano H."/>
            <person name="Wu T."/>
            <person name="Yu G."/>
            <person name="Miranda M."/>
            <person name="Quach H.L."/>
            <person name="Tripp M."/>
            <person name="Chang C.H."/>
            <person name="Lee J.M."/>
            <person name="Toriumi M.J."/>
            <person name="Chan M.M."/>
            <person name="Tang C.C."/>
            <person name="Onodera C.S."/>
            <person name="Deng J.M."/>
            <person name="Akiyama K."/>
            <person name="Ansari Y."/>
            <person name="Arakawa T."/>
            <person name="Banh J."/>
            <person name="Banno F."/>
            <person name="Bowser L."/>
            <person name="Brooks S.Y."/>
            <person name="Carninci P."/>
            <person name="Chao Q."/>
            <person name="Choy N."/>
            <person name="Enju A."/>
            <person name="Goldsmith A.D."/>
            <person name="Gurjal M."/>
            <person name="Hansen N.F."/>
            <person name="Hayashizaki Y."/>
            <person name="Johnson-Hopson C."/>
            <person name="Hsuan V.W."/>
            <person name="Iida K."/>
            <person name="Karnes M."/>
            <person name="Khan S."/>
            <person name="Koesema E."/>
            <person name="Ishida J."/>
            <person name="Jiang P.X."/>
            <person name="Jones T."/>
            <person name="Kawai J."/>
            <person name="Kamiya A."/>
            <person name="Meyers C."/>
            <person name="Nakajima M."/>
            <person name="Narusaka M."/>
            <person name="Seki M."/>
            <person name="Sakurai T."/>
            <person name="Satou M."/>
            <person name="Tamse R."/>
            <person name="Vaysberg M."/>
            <person name="Wallender E.K."/>
            <person name="Wong C."/>
            <person name="Yamamura Y."/>
            <person name="Yuan S."/>
            <person name="Shinozaki K."/>
            <person name="Davis R.W."/>
            <person name="Theologis A."/>
            <person name="Ecker J.R."/>
        </authorList>
    </citation>
    <scope>NUCLEOTIDE SEQUENCE [LARGE SCALE MRNA]</scope>
    <source>
        <strain>cv. Columbia</strain>
    </source>
</reference>
<reference key="4">
    <citation type="journal article" date="2009" name="DNA Res.">
        <title>Analysis of multiple occurrences of alternative splicing events in Arabidopsis thaliana using novel sequenced full-length cDNAs.</title>
        <authorList>
            <person name="Iida K."/>
            <person name="Fukami-Kobayashi K."/>
            <person name="Toyoda A."/>
            <person name="Sakaki Y."/>
            <person name="Kobayashi M."/>
            <person name="Seki M."/>
            <person name="Shinozaki K."/>
        </authorList>
    </citation>
    <scope>NUCLEOTIDE SEQUENCE [LARGE SCALE MRNA]</scope>
    <source>
        <strain>cv. Columbia</strain>
    </source>
</reference>
<reference key="5">
    <citation type="journal article" date="2002" name="Proc. Natl. Acad. Sci. U.S.A.">
        <title>The F-box subunit of the SCF E3 complex is encoded by a diverse superfamily of genes in Arabidopsis.</title>
        <authorList>
            <person name="Gagne J.M."/>
            <person name="Downes B.P."/>
            <person name="Shiu S.-H."/>
            <person name="Durski A.M."/>
            <person name="Vierstra R.D."/>
        </authorList>
    </citation>
    <scope>INTERACTION WITH ASK4</scope>
</reference>
<organism>
    <name type="scientific">Arabidopsis thaliana</name>
    <name type="common">Mouse-ear cress</name>
    <dbReference type="NCBI Taxonomy" id="3702"/>
    <lineage>
        <taxon>Eukaryota</taxon>
        <taxon>Viridiplantae</taxon>
        <taxon>Streptophyta</taxon>
        <taxon>Embryophyta</taxon>
        <taxon>Tracheophyta</taxon>
        <taxon>Spermatophyta</taxon>
        <taxon>Magnoliopsida</taxon>
        <taxon>eudicotyledons</taxon>
        <taxon>Gunneridae</taxon>
        <taxon>Pentapetalae</taxon>
        <taxon>rosids</taxon>
        <taxon>malvids</taxon>
        <taxon>Brassicales</taxon>
        <taxon>Brassicaceae</taxon>
        <taxon>Camelineae</taxon>
        <taxon>Arabidopsis</taxon>
    </lineage>
</organism>
<accession>Q9SZ44</accession>
<accession>B9DFP9</accession>
<accession>Q8W4N4</accession>